<feature type="chain" id="PRO_0000386477" description="Protein PhoH2">
    <location>
        <begin position="1"/>
        <end position="442"/>
    </location>
</feature>
<feature type="domain" description="PINc">
    <location>
        <begin position="3"/>
        <end position="135"/>
    </location>
</feature>
<feature type="binding site" evidence="2">
    <location>
        <begin position="259"/>
        <end position="266"/>
    </location>
    <ligand>
        <name>ATP</name>
        <dbReference type="ChEBI" id="CHEBI:30616"/>
    </ligand>
</feature>
<name>PHOH2_BACSU</name>
<comment type="function">
    <text evidence="1 4">Unwinds and/or cleaves 5'-tailed RNA in vitro (By similarity). Has ATPase and GTPase activities (By similarity). Unlike the protein in mycobacteria there does not seem to be an antitoxin gene upstream, suggesting this is not a toxin-antitoxin system (Probable).</text>
</comment>
<comment type="catalytic activity">
    <reaction evidence="1">
        <text>n ATP + n H2O + wound RNA = n ADP + n phosphate + unwound RNA.</text>
        <dbReference type="EC" id="5.6.2.5"/>
    </reaction>
</comment>
<comment type="catalytic activity">
    <reaction evidence="1">
        <text>ATP + H2O = ADP + phosphate + H(+)</text>
        <dbReference type="Rhea" id="RHEA:13065"/>
        <dbReference type="ChEBI" id="CHEBI:15377"/>
        <dbReference type="ChEBI" id="CHEBI:15378"/>
        <dbReference type="ChEBI" id="CHEBI:30616"/>
        <dbReference type="ChEBI" id="CHEBI:43474"/>
        <dbReference type="ChEBI" id="CHEBI:456216"/>
    </reaction>
</comment>
<comment type="catalytic activity">
    <reaction evidence="1">
        <text>GTP + H2O = GDP + phosphate + H(+)</text>
        <dbReference type="Rhea" id="RHEA:19669"/>
        <dbReference type="ChEBI" id="CHEBI:15377"/>
        <dbReference type="ChEBI" id="CHEBI:15378"/>
        <dbReference type="ChEBI" id="CHEBI:37565"/>
        <dbReference type="ChEBI" id="CHEBI:43474"/>
        <dbReference type="ChEBI" id="CHEBI:58189"/>
    </reaction>
</comment>
<comment type="similarity">
    <text evidence="4">In the N-terminal section; belongs to the PINc/VapC protein family.</text>
</comment>
<comment type="similarity">
    <text evidence="4">In the C-terminal section; belongs to the PhoH family.</text>
</comment>
<keyword id="KW-0067">ATP-binding</keyword>
<keyword id="KW-0342">GTP-binding</keyword>
<keyword id="KW-0347">Helicase</keyword>
<keyword id="KW-0378">Hydrolase</keyword>
<keyword id="KW-0413">Isomerase</keyword>
<keyword id="KW-0460">Magnesium</keyword>
<keyword id="KW-0479">Metal-binding</keyword>
<keyword id="KW-0540">Nuclease</keyword>
<keyword id="KW-0547">Nucleotide-binding</keyword>
<keyword id="KW-1185">Reference proteome</keyword>
<sequence length="442" mass="49331">MSKIYVLDTNVLLQDPNAIFSFEENEVVIPAVVLEEVDSKKRYMDEVGRNARHVSKLIDALRQKGRLHEHVPLDTGGTLRIELNHRSFHQLQEIFIEKTNDNRILAVAKNLSLEEETKENGRPVILVSKDVLVRVKADAIGLLAEDFLNDRVVDNDEMYSGYKDLYISQQLFSSFYGKNQISVNDVKQHAFYPNQFALMKDELGGSSSAVGIADKTGTVLKRLVFDDEHIWGIRPKNVQQTMALELLLREDIPLVTLIGKAGTGKTLLALAAGLLQTEDLGIYKKLVVARPIVPVGKDIGYLPGEKEEKLKPWMQPIFDNLEFLFNAKKPGELDAILAGIGSIQVEALTYIRGRSIPDQFIIIDEAQNLTRHEVKTLLTRVGEGSKIVLMGDPEQIDHPYLDSLNNGLAYVVERFKGQPISGSVKLLKGERSGLAQLAADLL</sequence>
<dbReference type="EC" id="3.1.-.-" evidence="1"/>
<dbReference type="EC" id="5.6.2.5" evidence="1"/>
<dbReference type="EMBL" id="Z97025">
    <property type="protein sequence ID" value="CAB09716.1"/>
    <property type="molecule type" value="Genomic_DNA"/>
</dbReference>
<dbReference type="EMBL" id="AL009126">
    <property type="protein sequence ID" value="CAB13354.1"/>
    <property type="molecule type" value="Genomic_DNA"/>
</dbReference>
<dbReference type="PIR" id="A69873">
    <property type="entry name" value="A69873"/>
</dbReference>
<dbReference type="RefSeq" id="NP_389364.1">
    <property type="nucleotide sequence ID" value="NC_000964.3"/>
</dbReference>
<dbReference type="RefSeq" id="WP_003245272.1">
    <property type="nucleotide sequence ID" value="NZ_OZ025638.1"/>
</dbReference>
<dbReference type="SMR" id="O07635"/>
<dbReference type="FunCoup" id="O07635">
    <property type="interactions" value="25"/>
</dbReference>
<dbReference type="STRING" id="224308.BSU14810"/>
<dbReference type="PaxDb" id="224308-BSU14810"/>
<dbReference type="DNASU" id="935933"/>
<dbReference type="EnsemblBacteria" id="CAB13354">
    <property type="protein sequence ID" value="CAB13354"/>
    <property type="gene ID" value="BSU_14810"/>
</dbReference>
<dbReference type="GeneID" id="935933"/>
<dbReference type="KEGG" id="bsu:BSU14810"/>
<dbReference type="PATRIC" id="fig|224308.179.peg.1615"/>
<dbReference type="eggNOG" id="COG1875">
    <property type="taxonomic scope" value="Bacteria"/>
</dbReference>
<dbReference type="InParanoid" id="O07635"/>
<dbReference type="OrthoDB" id="9773137at2"/>
<dbReference type="PhylomeDB" id="O07635"/>
<dbReference type="BioCyc" id="BSUB:BSU14810-MONOMER"/>
<dbReference type="Proteomes" id="UP000001570">
    <property type="component" value="Chromosome"/>
</dbReference>
<dbReference type="GO" id="GO:0005829">
    <property type="term" value="C:cytosol"/>
    <property type="evidence" value="ECO:0000318"/>
    <property type="project" value="GO_Central"/>
</dbReference>
<dbReference type="GO" id="GO:0005524">
    <property type="term" value="F:ATP binding"/>
    <property type="evidence" value="ECO:0000318"/>
    <property type="project" value="GO_Central"/>
</dbReference>
<dbReference type="GO" id="GO:0005525">
    <property type="term" value="F:GTP binding"/>
    <property type="evidence" value="ECO:0007669"/>
    <property type="project" value="UniProtKB-KW"/>
</dbReference>
<dbReference type="GO" id="GO:0004386">
    <property type="term" value="F:helicase activity"/>
    <property type="evidence" value="ECO:0007669"/>
    <property type="project" value="UniProtKB-KW"/>
</dbReference>
<dbReference type="GO" id="GO:0046872">
    <property type="term" value="F:metal ion binding"/>
    <property type="evidence" value="ECO:0007669"/>
    <property type="project" value="UniProtKB-KW"/>
</dbReference>
<dbReference type="GO" id="GO:0004518">
    <property type="term" value="F:nuclease activity"/>
    <property type="evidence" value="ECO:0007669"/>
    <property type="project" value="UniProtKB-KW"/>
</dbReference>
<dbReference type="CDD" id="cd09883">
    <property type="entry name" value="PIN_VapC_PhoHL-ATPase"/>
    <property type="match status" value="1"/>
</dbReference>
<dbReference type="FunFam" id="3.40.50.300:FF:000013">
    <property type="entry name" value="PhoH family ATPase"/>
    <property type="match status" value="1"/>
</dbReference>
<dbReference type="FunFam" id="3.40.50.1010:FF:000007">
    <property type="entry name" value="PhoH family protein"/>
    <property type="match status" value="1"/>
</dbReference>
<dbReference type="Gene3D" id="3.40.50.1010">
    <property type="entry name" value="5'-nuclease"/>
    <property type="match status" value="1"/>
</dbReference>
<dbReference type="Gene3D" id="3.40.50.300">
    <property type="entry name" value="P-loop containing nucleotide triphosphate hydrolases"/>
    <property type="match status" value="1"/>
</dbReference>
<dbReference type="InterPro" id="IPR027417">
    <property type="entry name" value="P-loop_NTPase"/>
</dbReference>
<dbReference type="InterPro" id="IPR003714">
    <property type="entry name" value="PhoH"/>
</dbReference>
<dbReference type="InterPro" id="IPR051451">
    <property type="entry name" value="PhoH2-like"/>
</dbReference>
<dbReference type="InterPro" id="IPR029060">
    <property type="entry name" value="PIN-like_dom_sf"/>
</dbReference>
<dbReference type="InterPro" id="IPR002716">
    <property type="entry name" value="PIN_dom"/>
</dbReference>
<dbReference type="PANTHER" id="PTHR30473:SF2">
    <property type="entry name" value="PIN DOMAIN-CONTAINING PROTEIN"/>
    <property type="match status" value="1"/>
</dbReference>
<dbReference type="PANTHER" id="PTHR30473">
    <property type="entry name" value="PROTEIN PHOH"/>
    <property type="match status" value="1"/>
</dbReference>
<dbReference type="Pfam" id="PF02562">
    <property type="entry name" value="PhoH"/>
    <property type="match status" value="1"/>
</dbReference>
<dbReference type="Pfam" id="PF13638">
    <property type="entry name" value="PIN_4"/>
    <property type="match status" value="1"/>
</dbReference>
<dbReference type="SMART" id="SM00670">
    <property type="entry name" value="PINc"/>
    <property type="match status" value="1"/>
</dbReference>
<dbReference type="SUPFAM" id="SSF52540">
    <property type="entry name" value="P-loop containing nucleoside triphosphate hydrolases"/>
    <property type="match status" value="1"/>
</dbReference>
<dbReference type="SUPFAM" id="SSF88723">
    <property type="entry name" value="PIN domain-like"/>
    <property type="match status" value="1"/>
</dbReference>
<evidence type="ECO:0000250" key="1">
    <source>
        <dbReference type="UniProtKB" id="O53443"/>
    </source>
</evidence>
<evidence type="ECO:0000255" key="2"/>
<evidence type="ECO:0000303" key="3">
    <source>
    </source>
</evidence>
<evidence type="ECO:0000305" key="4"/>
<gene>
    <name evidence="3" type="primary">ylaK</name>
    <name type="ordered locus">BSU14810</name>
</gene>
<accession>O07635</accession>
<accession>Q796J2</accession>
<reference key="1">
    <citation type="submission" date="1997-06" db="EMBL/GenBank/DDBJ databases">
        <title>Bacillus subtilis chromosomal region downstream nprE.</title>
        <authorList>
            <person name="Purnelle B."/>
            <person name="Presecan E."/>
            <person name="Glaser P."/>
            <person name="Richou A."/>
            <person name="Danchin A."/>
            <person name="Goffeau A."/>
        </authorList>
    </citation>
    <scope>NUCLEOTIDE SEQUENCE [GENOMIC DNA]</scope>
    <source>
        <strain>168</strain>
    </source>
</reference>
<reference key="2">
    <citation type="journal article" date="1997" name="Nature">
        <title>The complete genome sequence of the Gram-positive bacterium Bacillus subtilis.</title>
        <authorList>
            <person name="Kunst F."/>
            <person name="Ogasawara N."/>
            <person name="Moszer I."/>
            <person name="Albertini A.M."/>
            <person name="Alloni G."/>
            <person name="Azevedo V."/>
            <person name="Bertero M.G."/>
            <person name="Bessieres P."/>
            <person name="Bolotin A."/>
            <person name="Borchert S."/>
            <person name="Borriss R."/>
            <person name="Boursier L."/>
            <person name="Brans A."/>
            <person name="Braun M."/>
            <person name="Brignell S.C."/>
            <person name="Bron S."/>
            <person name="Brouillet S."/>
            <person name="Bruschi C.V."/>
            <person name="Caldwell B."/>
            <person name="Capuano V."/>
            <person name="Carter N.M."/>
            <person name="Choi S.-K."/>
            <person name="Codani J.-J."/>
            <person name="Connerton I.F."/>
            <person name="Cummings N.J."/>
            <person name="Daniel R.A."/>
            <person name="Denizot F."/>
            <person name="Devine K.M."/>
            <person name="Duesterhoeft A."/>
            <person name="Ehrlich S.D."/>
            <person name="Emmerson P.T."/>
            <person name="Entian K.-D."/>
            <person name="Errington J."/>
            <person name="Fabret C."/>
            <person name="Ferrari E."/>
            <person name="Foulger D."/>
            <person name="Fritz C."/>
            <person name="Fujita M."/>
            <person name="Fujita Y."/>
            <person name="Fuma S."/>
            <person name="Galizzi A."/>
            <person name="Galleron N."/>
            <person name="Ghim S.-Y."/>
            <person name="Glaser P."/>
            <person name="Goffeau A."/>
            <person name="Golightly E.J."/>
            <person name="Grandi G."/>
            <person name="Guiseppi G."/>
            <person name="Guy B.J."/>
            <person name="Haga K."/>
            <person name="Haiech J."/>
            <person name="Harwood C.R."/>
            <person name="Henaut A."/>
            <person name="Hilbert H."/>
            <person name="Holsappel S."/>
            <person name="Hosono S."/>
            <person name="Hullo M.-F."/>
            <person name="Itaya M."/>
            <person name="Jones L.-M."/>
            <person name="Joris B."/>
            <person name="Karamata D."/>
            <person name="Kasahara Y."/>
            <person name="Klaerr-Blanchard M."/>
            <person name="Klein C."/>
            <person name="Kobayashi Y."/>
            <person name="Koetter P."/>
            <person name="Koningstein G."/>
            <person name="Krogh S."/>
            <person name="Kumano M."/>
            <person name="Kurita K."/>
            <person name="Lapidus A."/>
            <person name="Lardinois S."/>
            <person name="Lauber J."/>
            <person name="Lazarevic V."/>
            <person name="Lee S.-M."/>
            <person name="Levine A."/>
            <person name="Liu H."/>
            <person name="Masuda S."/>
            <person name="Mauel C."/>
            <person name="Medigue C."/>
            <person name="Medina N."/>
            <person name="Mellado R.P."/>
            <person name="Mizuno M."/>
            <person name="Moestl D."/>
            <person name="Nakai S."/>
            <person name="Noback M."/>
            <person name="Noone D."/>
            <person name="O'Reilly M."/>
            <person name="Ogawa K."/>
            <person name="Ogiwara A."/>
            <person name="Oudega B."/>
            <person name="Park S.-H."/>
            <person name="Parro V."/>
            <person name="Pohl T.M."/>
            <person name="Portetelle D."/>
            <person name="Porwollik S."/>
            <person name="Prescott A.M."/>
            <person name="Presecan E."/>
            <person name="Pujic P."/>
            <person name="Purnelle B."/>
            <person name="Rapoport G."/>
            <person name="Rey M."/>
            <person name="Reynolds S."/>
            <person name="Rieger M."/>
            <person name="Rivolta C."/>
            <person name="Rocha E."/>
            <person name="Roche B."/>
            <person name="Rose M."/>
            <person name="Sadaie Y."/>
            <person name="Sato T."/>
            <person name="Scanlan E."/>
            <person name="Schleich S."/>
            <person name="Schroeter R."/>
            <person name="Scoffone F."/>
            <person name="Sekiguchi J."/>
            <person name="Sekowska A."/>
            <person name="Seror S.J."/>
            <person name="Serror P."/>
            <person name="Shin B.-S."/>
            <person name="Soldo B."/>
            <person name="Sorokin A."/>
            <person name="Tacconi E."/>
            <person name="Takagi T."/>
            <person name="Takahashi H."/>
            <person name="Takemaru K."/>
            <person name="Takeuchi M."/>
            <person name="Tamakoshi A."/>
            <person name="Tanaka T."/>
            <person name="Terpstra P."/>
            <person name="Tognoni A."/>
            <person name="Tosato V."/>
            <person name="Uchiyama S."/>
            <person name="Vandenbol M."/>
            <person name="Vannier F."/>
            <person name="Vassarotti A."/>
            <person name="Viari A."/>
            <person name="Wambutt R."/>
            <person name="Wedler E."/>
            <person name="Wedler H."/>
            <person name="Weitzenegger T."/>
            <person name="Winters P."/>
            <person name="Wipat A."/>
            <person name="Yamamoto H."/>
            <person name="Yamane K."/>
            <person name="Yasumoto K."/>
            <person name="Yata K."/>
            <person name="Yoshida K."/>
            <person name="Yoshikawa H.-F."/>
            <person name="Zumstein E."/>
            <person name="Yoshikawa H."/>
            <person name="Danchin A."/>
        </authorList>
    </citation>
    <scope>NUCLEOTIDE SEQUENCE [LARGE SCALE GENOMIC DNA]</scope>
    <source>
        <strain>168</strain>
    </source>
</reference>
<proteinExistence type="inferred from homology"/>
<organism>
    <name type="scientific">Bacillus subtilis (strain 168)</name>
    <dbReference type="NCBI Taxonomy" id="224308"/>
    <lineage>
        <taxon>Bacteria</taxon>
        <taxon>Bacillati</taxon>
        <taxon>Bacillota</taxon>
        <taxon>Bacilli</taxon>
        <taxon>Bacillales</taxon>
        <taxon>Bacillaceae</taxon>
        <taxon>Bacillus</taxon>
    </lineage>
</organism>
<protein>
    <recommendedName>
        <fullName evidence="1">Protein PhoH2</fullName>
        <ecNumber evidence="1">3.1.-.-</ecNumber>
        <ecNumber evidence="1">5.6.2.5</ecNumber>
    </recommendedName>
    <alternativeName>
        <fullName>Protein YlaK</fullName>
    </alternativeName>
    <alternativeName>
        <fullName evidence="4">RNA 5'-3' helicase PhoH2</fullName>
    </alternativeName>
</protein>